<dbReference type="EMBL" id="AP009351">
    <property type="protein sequence ID" value="BAF66860.1"/>
    <property type="molecule type" value="Genomic_DNA"/>
</dbReference>
<dbReference type="RefSeq" id="WP_001018677.1">
    <property type="nucleotide sequence ID" value="NZ_JBBIAE010000002.1"/>
</dbReference>
<dbReference type="SMR" id="A6QES8"/>
<dbReference type="KEGG" id="sae:NWMN_0588"/>
<dbReference type="HOGENOM" id="CLU_164084_0_0_9"/>
<dbReference type="PRO" id="PR:A6QES8"/>
<dbReference type="Proteomes" id="UP000006386">
    <property type="component" value="Chromosome"/>
</dbReference>
<dbReference type="GO" id="GO:0005737">
    <property type="term" value="C:cytoplasm"/>
    <property type="evidence" value="ECO:0007669"/>
    <property type="project" value="UniProtKB-SubCell"/>
</dbReference>
<dbReference type="GO" id="GO:0003677">
    <property type="term" value="F:DNA binding"/>
    <property type="evidence" value="ECO:0007669"/>
    <property type="project" value="UniProtKB-KW"/>
</dbReference>
<dbReference type="GO" id="GO:0003700">
    <property type="term" value="F:DNA-binding transcription factor activity"/>
    <property type="evidence" value="ECO:0007669"/>
    <property type="project" value="InterPro"/>
</dbReference>
<dbReference type="GO" id="GO:0046872">
    <property type="term" value="F:metal ion binding"/>
    <property type="evidence" value="ECO:0007669"/>
    <property type="project" value="UniProtKB-KW"/>
</dbReference>
<dbReference type="GO" id="GO:0006950">
    <property type="term" value="P:response to stress"/>
    <property type="evidence" value="ECO:0007669"/>
    <property type="project" value="TreeGrafter"/>
</dbReference>
<dbReference type="FunFam" id="1.10.10.10:FF:000541">
    <property type="entry name" value="Transcriptional regulator SarA"/>
    <property type="match status" value="1"/>
</dbReference>
<dbReference type="Gene3D" id="1.10.10.10">
    <property type="entry name" value="Winged helix-like DNA-binding domain superfamily/Winged helix DNA-binding domain"/>
    <property type="match status" value="1"/>
</dbReference>
<dbReference type="InterPro" id="IPR039422">
    <property type="entry name" value="MarR/SlyA-like"/>
</dbReference>
<dbReference type="InterPro" id="IPR010166">
    <property type="entry name" value="SarA/Rot_dom"/>
</dbReference>
<dbReference type="InterPro" id="IPR055166">
    <property type="entry name" value="Transc_reg_Sar_Rot_HTH"/>
</dbReference>
<dbReference type="InterPro" id="IPR036388">
    <property type="entry name" value="WH-like_DNA-bd_sf"/>
</dbReference>
<dbReference type="InterPro" id="IPR036390">
    <property type="entry name" value="WH_DNA-bd_sf"/>
</dbReference>
<dbReference type="NCBIfam" id="TIGR01889">
    <property type="entry name" value="Staph_reg_Sar"/>
    <property type="match status" value="1"/>
</dbReference>
<dbReference type="NCBIfam" id="NF038268">
    <property type="entry name" value="TF_SarA"/>
    <property type="match status" value="1"/>
</dbReference>
<dbReference type="PANTHER" id="PTHR33164:SF5">
    <property type="entry name" value="ORGANIC HYDROPEROXIDE RESISTANCE TRANSCRIPTIONAL REGULATOR"/>
    <property type="match status" value="1"/>
</dbReference>
<dbReference type="PANTHER" id="PTHR33164">
    <property type="entry name" value="TRANSCRIPTIONAL REGULATOR, MARR FAMILY"/>
    <property type="match status" value="1"/>
</dbReference>
<dbReference type="Pfam" id="PF22381">
    <property type="entry name" value="Staph_reg_Sar_Rot"/>
    <property type="match status" value="1"/>
</dbReference>
<dbReference type="SUPFAM" id="SSF46785">
    <property type="entry name" value="Winged helix' DNA-binding domain"/>
    <property type="match status" value="1"/>
</dbReference>
<name>SARA_STAAE</name>
<sequence length="124" mass="14718">MAITKINDCFELLSMVTYADKLKSLIKKEFSISFEEFAVLTYISENKEKEYYLKDIINHLNYKQPQVVKAVKILSQEDYFDKKRNEHDERTVLILVNAQQRKKIESLLSRVNKRITEANNEIEL</sequence>
<organism>
    <name type="scientific">Staphylococcus aureus (strain Newman)</name>
    <dbReference type="NCBI Taxonomy" id="426430"/>
    <lineage>
        <taxon>Bacteria</taxon>
        <taxon>Bacillati</taxon>
        <taxon>Bacillota</taxon>
        <taxon>Bacilli</taxon>
        <taxon>Bacillales</taxon>
        <taxon>Staphylococcaceae</taxon>
        <taxon>Staphylococcus</taxon>
    </lineage>
</organism>
<evidence type="ECO:0000250" key="1"/>
<evidence type="ECO:0000269" key="2">
    <source>
    </source>
</evidence>
<evidence type="ECO:0000269" key="3">
    <source>
    </source>
</evidence>
<evidence type="ECO:0000305" key="4"/>
<protein>
    <recommendedName>
        <fullName>Transcriptional regulator SarA</fullName>
    </recommendedName>
    <alternativeName>
        <fullName>Staphylococcal accessory regulator A</fullName>
    </alternativeName>
</protein>
<comment type="function">
    <text evidence="2 3">Global regulator with both positive and negative effects that controls expression of several virulence factors and biofilm formation process in a cell density-dependent manner. In a strain-dependent manner plays a role in multidrug resistance mechanism. Is required for transcription of primary transcripts RNAII and RNAIII generated by agr (virulence accessory gene regulator) locus. Acts as a transcriptional activator of the genes encoding, among others, for fibronectin binding proteins (fnbA and fnbB), hemolysins (hla, hld, hlgB and hlgC), serine proteases (splA, splB, splD and splF) and of the bap gene, which is essential for biofilm development in some strains. Negatively regulates the expression of the genes for protein A (spa), lipase (lip), thermonuclease (nuc), immunodominant staphylococcal antigen B (isaB), staphylococcal serine and cysteine proteases (sspA and sspB), staphostatin B (sspC), metalloprotease aureolysin (aur) and collagen adhesin (cna). Probably activates the development of biofilm by both enhancing the ica operon transcription and suppressing the transcription of either a protein involved in the turnover of PIA/PNAG or a repressor of its synthesis, whose expression would be sigma-B-dependent.</text>
</comment>
<comment type="subunit">
    <text evidence="1">Homodimer.</text>
</comment>
<comment type="subcellular location">
    <subcellularLocation>
        <location evidence="1">Cytoplasm</location>
    </subcellularLocation>
</comment>
<comment type="induction">
    <text>Expressed at the exponential growth phase and maximally induced during the transition from late exponential phase to stationary phase. Repressed by SarR and activated by two-component regulatory system ArlS/ArlR. Activated by SigB in strains harboring an intact sigB operon (rsbU, rsbV, rsbW, and sigB). Transcription is also attenuated by MsrR.</text>
</comment>
<comment type="similarity">
    <text evidence="4">Belongs to the SarA family.</text>
</comment>
<reference key="1">
    <citation type="journal article" date="2008" name="J. Bacteriol.">
        <title>Genome sequence of Staphylococcus aureus strain Newman and comparative analysis of staphylococcal genomes: polymorphism and evolution of two major pathogenicity islands.</title>
        <authorList>
            <person name="Baba T."/>
            <person name="Bae T."/>
            <person name="Schneewind O."/>
            <person name="Takeuchi F."/>
            <person name="Hiramatsu K."/>
        </authorList>
    </citation>
    <scope>NUCLEOTIDE SEQUENCE [LARGE SCALE GENOMIC DNA]</scope>
    <source>
        <strain>Newman</strain>
    </source>
</reference>
<reference key="2">
    <citation type="journal article" date="2001" name="J. Bacteriol.">
        <title>Influence of a functional sigB operon on the global regulators sar and agr in Staphylococcus aureus.</title>
        <authorList>
            <person name="Bischoff M."/>
            <person name="Entenza J.M."/>
            <person name="Giachino P."/>
        </authorList>
    </citation>
    <scope>REGULATION BY SIGB</scope>
</reference>
<reference key="3">
    <citation type="journal article" date="2004" name="FEMS Microbiol. Lett.">
        <title>Effects of sarA inactivation on the intrinsic multidrug resistance mechanism of Staphylococcus aureus.</title>
        <authorList>
            <person name="O'Leary J.O."/>
            <person name="Langevin M.J."/>
            <person name="Price C.T."/>
            <person name="Blevins J.S."/>
            <person name="Smeltzer M.S."/>
            <person name="Gustafson J.E."/>
        </authorList>
    </citation>
    <scope>FUNCTION IN INTRINSIC MULTIDRUG RESISTANCE MECHANISM</scope>
</reference>
<reference key="4">
    <citation type="journal article" date="2005" name="J. Bacteriol.">
        <title>SarA positively controls bap-dependent biofilm formation in Staphylococcus aureus.</title>
        <authorList>
            <person name="Trotonda M.P."/>
            <person name="Manna A.C."/>
            <person name="Cheung A.L."/>
            <person name="Lasa I."/>
            <person name="Penades J.R."/>
        </authorList>
    </citation>
    <scope>FUNCTION</scope>
</reference>
<keyword id="KW-0010">Activator</keyword>
<keyword id="KW-0963">Cytoplasm</keyword>
<keyword id="KW-0238">DNA-binding</keyword>
<keyword id="KW-0479">Metal-binding</keyword>
<keyword id="KW-0678">Repressor</keyword>
<keyword id="KW-0804">Transcription</keyword>
<keyword id="KW-0805">Transcription regulation</keyword>
<keyword id="KW-0843">Virulence</keyword>
<gene>
    <name type="primary">sarA</name>
    <name type="ordered locus">NWMN_0588</name>
</gene>
<feature type="initiator methionine" description="Removed" evidence="1">
    <location>
        <position position="1"/>
    </location>
</feature>
<feature type="chain" id="PRO_0000324106" description="Transcriptional regulator SarA">
    <location>
        <begin position="2"/>
        <end position="124"/>
    </location>
</feature>
<feature type="binding site" evidence="1">
    <location>
        <position position="7"/>
    </location>
    <ligand>
        <name>a divalent metal cation</name>
        <dbReference type="ChEBI" id="CHEBI:60240"/>
    </ligand>
</feature>
<feature type="binding site" evidence="1">
    <location>
        <position position="8"/>
    </location>
    <ligand>
        <name>a divalent metal cation</name>
        <dbReference type="ChEBI" id="CHEBI:60240"/>
    </ligand>
</feature>
<feature type="binding site" evidence="1">
    <location>
        <position position="11"/>
    </location>
    <ligand>
        <name>a divalent metal cation</name>
        <dbReference type="ChEBI" id="CHEBI:60240"/>
    </ligand>
</feature>
<accession>A6QES8</accession>
<proteinExistence type="evidence at protein level"/>